<reference key="1">
    <citation type="submission" date="2006-05" db="EMBL/GenBank/DDBJ databases">
        <title>Complete sequence of chromosome 1 of Burkholderia cenocepacia AU 1054.</title>
        <authorList>
            <consortium name="US DOE Joint Genome Institute"/>
            <person name="Copeland A."/>
            <person name="Lucas S."/>
            <person name="Lapidus A."/>
            <person name="Barry K."/>
            <person name="Detter J.C."/>
            <person name="Glavina del Rio T."/>
            <person name="Hammon N."/>
            <person name="Israni S."/>
            <person name="Dalin E."/>
            <person name="Tice H."/>
            <person name="Pitluck S."/>
            <person name="Chain P."/>
            <person name="Malfatti S."/>
            <person name="Shin M."/>
            <person name="Vergez L."/>
            <person name="Schmutz J."/>
            <person name="Larimer F."/>
            <person name="Land M."/>
            <person name="Hauser L."/>
            <person name="Kyrpides N."/>
            <person name="Lykidis A."/>
            <person name="LiPuma J.J."/>
            <person name="Konstantinidis K."/>
            <person name="Tiedje J.M."/>
            <person name="Richardson P."/>
        </authorList>
    </citation>
    <scope>NUCLEOTIDE SEQUENCE [LARGE SCALE GENOMIC DNA]</scope>
    <source>
        <strain>AU 1054</strain>
    </source>
</reference>
<sequence length="152" mass="15998">MIALIQRVTRADVRVGGRTTGEIGAGLLALVCAERGDTEAAADKLLAKLLGYRVFSDAAGKMNLPVSNIDGEGRAGGLLLVSQFTLAADTNSGLRPSFTPAAPPDEGARLFDYFVAAARARHPIVETGEFGADMQVSLVNDGPVTFWLQVRP</sequence>
<gene>
    <name evidence="1" type="primary">dtd</name>
    <name type="ordered locus">Bcen_0201</name>
</gene>
<dbReference type="EC" id="3.1.1.96" evidence="1"/>
<dbReference type="EMBL" id="CP000378">
    <property type="protein sequence ID" value="ABF75115.1"/>
    <property type="molecule type" value="Genomic_DNA"/>
</dbReference>
<dbReference type="SMR" id="Q1BZ40"/>
<dbReference type="HOGENOM" id="CLU_076901_1_1_4"/>
<dbReference type="GO" id="GO:0005737">
    <property type="term" value="C:cytoplasm"/>
    <property type="evidence" value="ECO:0007669"/>
    <property type="project" value="UniProtKB-SubCell"/>
</dbReference>
<dbReference type="GO" id="GO:0051500">
    <property type="term" value="F:D-tyrosyl-tRNA(Tyr) deacylase activity"/>
    <property type="evidence" value="ECO:0007669"/>
    <property type="project" value="TreeGrafter"/>
</dbReference>
<dbReference type="GO" id="GO:0106026">
    <property type="term" value="F:Gly-tRNA(Ala) deacylase activity"/>
    <property type="evidence" value="ECO:0007669"/>
    <property type="project" value="UniProtKB-UniRule"/>
</dbReference>
<dbReference type="GO" id="GO:0043908">
    <property type="term" value="F:Ser(Gly)-tRNA(Ala) hydrolase activity"/>
    <property type="evidence" value="ECO:0007669"/>
    <property type="project" value="UniProtKB-UniRule"/>
</dbReference>
<dbReference type="GO" id="GO:0000049">
    <property type="term" value="F:tRNA binding"/>
    <property type="evidence" value="ECO:0007669"/>
    <property type="project" value="UniProtKB-UniRule"/>
</dbReference>
<dbReference type="GO" id="GO:0019478">
    <property type="term" value="P:D-amino acid catabolic process"/>
    <property type="evidence" value="ECO:0007669"/>
    <property type="project" value="UniProtKB-UniRule"/>
</dbReference>
<dbReference type="CDD" id="cd00563">
    <property type="entry name" value="Dtyr_deacylase"/>
    <property type="match status" value="1"/>
</dbReference>
<dbReference type="FunFam" id="3.50.80.10:FF:000001">
    <property type="entry name" value="D-aminoacyl-tRNA deacylase"/>
    <property type="match status" value="1"/>
</dbReference>
<dbReference type="Gene3D" id="3.50.80.10">
    <property type="entry name" value="D-tyrosyl-tRNA(Tyr) deacylase"/>
    <property type="match status" value="1"/>
</dbReference>
<dbReference type="HAMAP" id="MF_00518">
    <property type="entry name" value="Deacylase_Dtd"/>
    <property type="match status" value="1"/>
</dbReference>
<dbReference type="InterPro" id="IPR003732">
    <property type="entry name" value="Daa-tRNA_deacyls_DTD"/>
</dbReference>
<dbReference type="InterPro" id="IPR023509">
    <property type="entry name" value="DTD-like_sf"/>
</dbReference>
<dbReference type="NCBIfam" id="TIGR00256">
    <property type="entry name" value="D-aminoacyl-tRNA deacylase"/>
    <property type="match status" value="1"/>
</dbReference>
<dbReference type="PANTHER" id="PTHR10472:SF5">
    <property type="entry name" value="D-AMINOACYL-TRNA DEACYLASE 1"/>
    <property type="match status" value="1"/>
</dbReference>
<dbReference type="PANTHER" id="PTHR10472">
    <property type="entry name" value="D-TYROSYL-TRNA TYR DEACYLASE"/>
    <property type="match status" value="1"/>
</dbReference>
<dbReference type="Pfam" id="PF02580">
    <property type="entry name" value="Tyr_Deacylase"/>
    <property type="match status" value="1"/>
</dbReference>
<dbReference type="SUPFAM" id="SSF69500">
    <property type="entry name" value="DTD-like"/>
    <property type="match status" value="1"/>
</dbReference>
<keyword id="KW-0963">Cytoplasm</keyword>
<keyword id="KW-0378">Hydrolase</keyword>
<keyword id="KW-0694">RNA-binding</keyword>
<keyword id="KW-0820">tRNA-binding</keyword>
<protein>
    <recommendedName>
        <fullName evidence="1">D-aminoacyl-tRNA deacylase</fullName>
        <shortName evidence="1">DTD</shortName>
        <ecNumber evidence="1">3.1.1.96</ecNumber>
    </recommendedName>
    <alternativeName>
        <fullName evidence="1">Gly-tRNA(Ala) deacylase</fullName>
    </alternativeName>
</protein>
<comment type="function">
    <text evidence="1">An aminoacyl-tRNA editing enzyme that deacylates mischarged D-aminoacyl-tRNAs. Also deacylates mischarged glycyl-tRNA(Ala), protecting cells against glycine mischarging by AlaRS. Acts via tRNA-based rather than protein-based catalysis; rejects L-amino acids rather than detecting D-amino acids in the active site. By recycling D-aminoacyl-tRNA to D-amino acids and free tRNA molecules, this enzyme counteracts the toxicity associated with the formation of D-aminoacyl-tRNA entities in vivo and helps enforce protein L-homochirality.</text>
</comment>
<comment type="catalytic activity">
    <reaction evidence="1">
        <text>glycyl-tRNA(Ala) + H2O = tRNA(Ala) + glycine + H(+)</text>
        <dbReference type="Rhea" id="RHEA:53744"/>
        <dbReference type="Rhea" id="RHEA-COMP:9657"/>
        <dbReference type="Rhea" id="RHEA-COMP:13640"/>
        <dbReference type="ChEBI" id="CHEBI:15377"/>
        <dbReference type="ChEBI" id="CHEBI:15378"/>
        <dbReference type="ChEBI" id="CHEBI:57305"/>
        <dbReference type="ChEBI" id="CHEBI:78442"/>
        <dbReference type="ChEBI" id="CHEBI:78522"/>
        <dbReference type="EC" id="3.1.1.96"/>
    </reaction>
</comment>
<comment type="catalytic activity">
    <reaction evidence="1">
        <text>a D-aminoacyl-tRNA + H2O = a tRNA + a D-alpha-amino acid + H(+)</text>
        <dbReference type="Rhea" id="RHEA:13953"/>
        <dbReference type="Rhea" id="RHEA-COMP:10123"/>
        <dbReference type="Rhea" id="RHEA-COMP:10124"/>
        <dbReference type="ChEBI" id="CHEBI:15377"/>
        <dbReference type="ChEBI" id="CHEBI:15378"/>
        <dbReference type="ChEBI" id="CHEBI:59871"/>
        <dbReference type="ChEBI" id="CHEBI:78442"/>
        <dbReference type="ChEBI" id="CHEBI:79333"/>
        <dbReference type="EC" id="3.1.1.96"/>
    </reaction>
</comment>
<comment type="subunit">
    <text evidence="1">Homodimer.</text>
</comment>
<comment type="subcellular location">
    <subcellularLocation>
        <location evidence="1">Cytoplasm</location>
    </subcellularLocation>
</comment>
<comment type="domain">
    <text evidence="1">A Gly-cisPro motif from one monomer fits into the active site of the other monomer to allow specific chiral rejection of L-amino acids.</text>
</comment>
<comment type="similarity">
    <text evidence="1">Belongs to the DTD family.</text>
</comment>
<evidence type="ECO:0000255" key="1">
    <source>
        <dbReference type="HAMAP-Rule" id="MF_00518"/>
    </source>
</evidence>
<proteinExistence type="inferred from homology"/>
<name>DTD_BURO1</name>
<feature type="chain" id="PRO_0000259264" description="D-aminoacyl-tRNA deacylase">
    <location>
        <begin position="1"/>
        <end position="152"/>
    </location>
</feature>
<feature type="short sequence motif" description="Gly-cisPro motif, important for rejection of L-amino acids" evidence="1">
    <location>
        <begin position="142"/>
        <end position="143"/>
    </location>
</feature>
<accession>Q1BZ40</accession>
<organism>
    <name type="scientific">Burkholderia orbicola (strain AU 1054)</name>
    <dbReference type="NCBI Taxonomy" id="331271"/>
    <lineage>
        <taxon>Bacteria</taxon>
        <taxon>Pseudomonadati</taxon>
        <taxon>Pseudomonadota</taxon>
        <taxon>Betaproteobacteria</taxon>
        <taxon>Burkholderiales</taxon>
        <taxon>Burkholderiaceae</taxon>
        <taxon>Burkholderia</taxon>
        <taxon>Burkholderia cepacia complex</taxon>
        <taxon>Burkholderia orbicola</taxon>
    </lineage>
</organism>